<comment type="function">
    <text evidence="1">GTPase activator for the Rho-type GTPases by converting them to an inactive GDP-bound state.</text>
</comment>
<comment type="alternative products">
    <event type="alternative splicing"/>
    <isoform>
        <id>Q9P2N2-1</id>
        <name>1</name>
        <sequence type="displayed"/>
    </isoform>
    <isoform>
        <id>Q9P2N2-2</id>
        <name>2</name>
        <sequence type="described" ref="VSP_023726 VSP_023728"/>
    </isoform>
    <isoform>
        <id>Q9P2N2-3</id>
        <name>3</name>
        <sequence type="described" ref="VSP_023725 VSP_023727 VSP_023728"/>
    </isoform>
    <isoform>
        <id>Q9P2N2-5</id>
        <name>5</name>
        <sequence type="described" ref="VSP_039971"/>
    </isoform>
</comment>
<comment type="tissue specificity">
    <text evidence="5">Expressed in testis. Expressed at moderate level in kidney and ovary, and weakly expressed in spleen and skeletal muscle.</text>
</comment>
<comment type="sequence caution" evidence="12">
    <conflict type="erroneous initiation">
        <sequence resource="EMBL-CDS" id="BAA91533"/>
    </conflict>
    <text>Truncated N-terminus.</text>
</comment>
<comment type="sequence caution" evidence="12">
    <conflict type="erroneous initiation">
        <sequence resource="EMBL-CDS" id="BAA92552"/>
    </conflict>
    <text>Extended N-terminus.</text>
</comment>
<feature type="chain" id="PRO_0000280476" description="Rho GTPase-activating protein 28">
    <location>
        <begin position="1"/>
        <end position="729"/>
    </location>
</feature>
<feature type="domain" description="Rho-GAP" evidence="3">
    <location>
        <begin position="380"/>
        <end position="577"/>
    </location>
</feature>
<feature type="region of interest" description="Disordered" evidence="4">
    <location>
        <begin position="20"/>
        <end position="42"/>
    </location>
</feature>
<feature type="region of interest" description="Disordered" evidence="4">
    <location>
        <begin position="55"/>
        <end position="105"/>
    </location>
</feature>
<feature type="region of interest" description="Disordered" evidence="4">
    <location>
        <begin position="176"/>
        <end position="236"/>
    </location>
</feature>
<feature type="region of interest" description="Disordered" evidence="4">
    <location>
        <begin position="612"/>
        <end position="631"/>
    </location>
</feature>
<feature type="compositionally biased region" description="Polar residues" evidence="4">
    <location>
        <begin position="65"/>
        <end position="75"/>
    </location>
</feature>
<feature type="compositionally biased region" description="Basic and acidic residues" evidence="4">
    <location>
        <begin position="80"/>
        <end position="89"/>
    </location>
</feature>
<feature type="compositionally biased region" description="Basic and acidic residues" evidence="4">
    <location>
        <begin position="195"/>
        <end position="204"/>
    </location>
</feature>
<feature type="compositionally biased region" description="Polar residues" evidence="4">
    <location>
        <begin position="217"/>
        <end position="226"/>
    </location>
</feature>
<feature type="compositionally biased region" description="Polar residues" evidence="4">
    <location>
        <begin position="619"/>
        <end position="630"/>
    </location>
</feature>
<feature type="site" description="Arginine finger; crucial for GTP hydrolysis by stabilizing the transition state" evidence="3">
    <location>
        <position position="421"/>
    </location>
</feature>
<feature type="modified residue" description="Phosphoserine" evidence="2">
    <location>
        <position position="72"/>
    </location>
</feature>
<feature type="modified residue" description="Phosphothreonine" evidence="2">
    <location>
        <position position="159"/>
    </location>
</feature>
<feature type="splice variant" id="VSP_023725" description="In isoform 3." evidence="9 10">
    <location>
        <begin position="1"/>
        <end position="177"/>
    </location>
</feature>
<feature type="splice variant" id="VSP_039971" description="In isoform 5." evidence="11">
    <location>
        <begin position="1"/>
        <end position="159"/>
    </location>
</feature>
<feature type="splice variant" id="VSP_023726" description="In isoform 2." evidence="8">
    <location>
        <begin position="1"/>
        <end position="52"/>
    </location>
</feature>
<feature type="splice variant" id="VSP_023727" description="In isoform 3." evidence="9 10">
    <original>SESP</original>
    <variation>MNEL</variation>
    <location>
        <begin position="178"/>
        <end position="181"/>
    </location>
</feature>
<feature type="splice variant" id="VSP_023728" description="In isoform 2 and isoform 3." evidence="8 9 10">
    <original>SHGSSECIKIQNQRLYEIGGNIGEHCLDPDAYILDVYRINPQAEWVIKPQQSS</original>
    <variation>RILHWQRAALSFLNGKWVKKEREESTETNRSPKHVFLFTIGLDIST</variation>
    <location>
        <begin position="677"/>
        <end position="729"/>
    </location>
</feature>
<feature type="sequence variant" id="VAR_055833" description="In dbSNP:rs2303978.">
    <original>I</original>
    <variation>V</variation>
    <location>
        <position position="168"/>
    </location>
</feature>
<feature type="sequence variant" id="VAR_031155" description="In dbSNP:rs6506448.">
    <original>T</original>
    <variation>S</variation>
    <location>
        <position position="190"/>
    </location>
</feature>
<feature type="sequence variant" id="VAR_031156" description="In dbSNP:rs1056408." evidence="5 6 7">
    <original>Q</original>
    <variation>P</variation>
    <location>
        <position position="727"/>
    </location>
</feature>
<feature type="sequence conflict" description="In Ref. 2; BX648684." evidence="12" ref="2">
    <original>K</original>
    <variation>E</variation>
    <location>
        <position position="598"/>
    </location>
</feature>
<protein>
    <recommendedName>
        <fullName>Rho GTPase-activating protein 28</fullName>
    </recommendedName>
    <alternativeName>
        <fullName>Rho-type GTPase-activating protein 28</fullName>
    </alternativeName>
</protein>
<organism>
    <name type="scientific">Homo sapiens</name>
    <name type="common">Human</name>
    <dbReference type="NCBI Taxonomy" id="9606"/>
    <lineage>
        <taxon>Eukaryota</taxon>
        <taxon>Metazoa</taxon>
        <taxon>Chordata</taxon>
        <taxon>Craniata</taxon>
        <taxon>Vertebrata</taxon>
        <taxon>Euteleostomi</taxon>
        <taxon>Mammalia</taxon>
        <taxon>Eutheria</taxon>
        <taxon>Euarchontoglires</taxon>
        <taxon>Primates</taxon>
        <taxon>Haplorrhini</taxon>
        <taxon>Catarrhini</taxon>
        <taxon>Hominidae</taxon>
        <taxon>Homo</taxon>
    </lineage>
</organism>
<keyword id="KW-0025">Alternative splicing</keyword>
<keyword id="KW-0343">GTPase activation</keyword>
<keyword id="KW-0597">Phosphoprotein</keyword>
<keyword id="KW-1267">Proteomics identification</keyword>
<keyword id="KW-1185">Reference proteome</keyword>
<evidence type="ECO:0000250" key="1"/>
<evidence type="ECO:0000250" key="2">
    <source>
        <dbReference type="UniProtKB" id="Q8BN58"/>
    </source>
</evidence>
<evidence type="ECO:0000255" key="3">
    <source>
        <dbReference type="PROSITE-ProRule" id="PRU00172"/>
    </source>
</evidence>
<evidence type="ECO:0000256" key="4">
    <source>
        <dbReference type="SAM" id="MobiDB-lite"/>
    </source>
</evidence>
<evidence type="ECO:0000269" key="5">
    <source>
    </source>
</evidence>
<evidence type="ECO:0000269" key="6">
    <source>
    </source>
</evidence>
<evidence type="ECO:0000269" key="7">
    <source>
    </source>
</evidence>
<evidence type="ECO:0000303" key="8">
    <source>
    </source>
</evidence>
<evidence type="ECO:0000303" key="9">
    <source>
    </source>
</evidence>
<evidence type="ECO:0000303" key="10">
    <source>
    </source>
</evidence>
<evidence type="ECO:0000303" key="11">
    <source>
    </source>
</evidence>
<evidence type="ECO:0000305" key="12"/>
<accession>Q9P2N2</accession>
<accession>A8MQB7</accession>
<accession>A8MU88</accession>
<accession>Q6P160</accession>
<accession>Q8N4T3</accession>
<accession>Q9NW53</accession>
<gene>
    <name type="primary">ARHGAP28</name>
    <name type="synonym">KIAA1314</name>
</gene>
<sequence length="729" mass="82060">MEVEDSGGVVLTAYHSYARAQPPNAESRCAPRAAASHPLSRKSIPRCRRINRMLSNESLHPPAFSRSNSEASVDSASMEDFWREIESIKDSSMGGQEEPPPAEVTPVDEGELEAEWLQDVGLSTLISGDEEEDGKALLSTLTRTQAAAVQKRYHTYTQTMRKKDKQSIRDVRDIFGVSESPPRDTCGNHTNQLDGTKEERELPRVIKTSGSMPDDASLNSTTLSDASQDKEGSFAVPRSDSVAILETIPVLPVHSNGSPEPGQPVQNAISDDDFLEKNIPPEAEELSFEVSYSEMVTEALKRNKLKKSEIKKEDYVLTKFNVQKTRFGLTEAGDLSAEDMKKIRHLSLIELTAFFDAFGIQLKRNKTEKVKGRDNGIFGVPLTVLLDGDRKKDPGVKVPLVLQKFFEKVEESGLESEGIFRLSGCTAKVKQYREELDAKFNADKFKWDKMCHREAAVMLKAFFRELPTSLFPVEYIPAFISLMERGPHVKVQFQALHLMVMALPDANRDAAQALMTFFNKVIANESKNRMSLWNISTVMAPNLFFSRSKHSDYEELLLANTAAHIIRLMLKYQKILWKVPSFLITQVRRMNEATMLLKKQLPSVRKLLRRKTLERETASPKTSKVLQKSPSARRMSDVPEGVIRVHAPLLSKVSMAIQLNNQTKAKDILAKFQYENSHGSSECIKIQNQRLYEIGGNIGEHCLDPDAYILDVYRINPQAEWVIKPQQSS</sequence>
<name>RHG28_HUMAN</name>
<proteinExistence type="evidence at protein level"/>
<dbReference type="EMBL" id="AB037735">
    <property type="protein sequence ID" value="BAA92552.1"/>
    <property type="status" value="ALT_INIT"/>
    <property type="molecule type" value="mRNA"/>
</dbReference>
<dbReference type="EMBL" id="BX648684">
    <property type="status" value="NOT_ANNOTATED_CDS"/>
    <property type="molecule type" value="mRNA"/>
</dbReference>
<dbReference type="EMBL" id="AP005205">
    <property type="status" value="NOT_ANNOTATED_CDS"/>
    <property type="molecule type" value="Genomic_DNA"/>
</dbReference>
<dbReference type="EMBL" id="AP005210">
    <property type="status" value="NOT_ANNOTATED_CDS"/>
    <property type="molecule type" value="Genomic_DNA"/>
</dbReference>
<dbReference type="EMBL" id="BC033668">
    <property type="protein sequence ID" value="AAH33668.2"/>
    <property type="molecule type" value="mRNA"/>
</dbReference>
<dbReference type="EMBL" id="BC065274">
    <property type="protein sequence ID" value="AAH65274.1"/>
    <property type="molecule type" value="mRNA"/>
</dbReference>
<dbReference type="EMBL" id="AK001174">
    <property type="protein sequence ID" value="BAA91533.1"/>
    <property type="status" value="ALT_INIT"/>
    <property type="molecule type" value="mRNA"/>
</dbReference>
<dbReference type="CCDS" id="CCDS32785.1">
    <molecule id="Q9P2N2-5"/>
</dbReference>
<dbReference type="CCDS" id="CCDS92429.1">
    <molecule id="Q9P2N2-1"/>
</dbReference>
<dbReference type="CCDS" id="CCDS92430.1">
    <molecule id="Q9P2N2-2"/>
</dbReference>
<dbReference type="PIR" id="E59436">
    <property type="entry name" value="E59436"/>
</dbReference>
<dbReference type="RefSeq" id="NP_001010000.1">
    <molecule id="Q9P2N2-5"/>
    <property type="nucleotide sequence ID" value="NM_001010000.3"/>
</dbReference>
<dbReference type="RefSeq" id="NP_001353159.1">
    <molecule id="Q9P2N2-1"/>
    <property type="nucleotide sequence ID" value="NM_001366230.1"/>
</dbReference>
<dbReference type="RefSeq" id="NP_001397802.1">
    <molecule id="Q9P2N2-2"/>
    <property type="nucleotide sequence ID" value="NM_001410873.1"/>
</dbReference>
<dbReference type="RefSeq" id="XP_047293759.1">
    <molecule id="Q9P2N2-5"/>
    <property type="nucleotide sequence ID" value="XM_047437803.1"/>
</dbReference>
<dbReference type="SMR" id="Q9P2N2"/>
<dbReference type="FunCoup" id="Q9P2N2">
    <property type="interactions" value="1411"/>
</dbReference>
<dbReference type="IntAct" id="Q9P2N2">
    <property type="interactions" value="5"/>
</dbReference>
<dbReference type="STRING" id="9606.ENSP00000392660"/>
<dbReference type="GlyConnect" id="2070">
    <property type="glycosylation" value="1 N-Linked glycan (1 site)"/>
</dbReference>
<dbReference type="GlyCosmos" id="Q9P2N2">
    <property type="glycosylation" value="1 site, 2 glycans"/>
</dbReference>
<dbReference type="GlyGen" id="Q9P2N2">
    <property type="glycosylation" value="1 site, 2 N-linked glycans (1 site)"/>
</dbReference>
<dbReference type="iPTMnet" id="Q9P2N2"/>
<dbReference type="PhosphoSitePlus" id="Q9P2N2"/>
<dbReference type="BioMuta" id="ARHGAP28"/>
<dbReference type="DMDM" id="311033539"/>
<dbReference type="jPOST" id="Q9P2N2"/>
<dbReference type="MassIVE" id="Q9P2N2"/>
<dbReference type="PaxDb" id="9606-ENSP00000392660"/>
<dbReference type="PeptideAtlas" id="Q9P2N2"/>
<dbReference type="ProteomicsDB" id="83851">
    <molecule id="Q9P2N2-1"/>
</dbReference>
<dbReference type="ProteomicsDB" id="83852">
    <molecule id="Q9P2N2-2"/>
</dbReference>
<dbReference type="ProteomicsDB" id="83853">
    <molecule id="Q9P2N2-3"/>
</dbReference>
<dbReference type="ProteomicsDB" id="83854">
    <molecule id="Q9P2N2-5"/>
</dbReference>
<dbReference type="Pumba" id="Q9P2N2"/>
<dbReference type="Antibodypedia" id="21924">
    <property type="antibodies" value="122 antibodies from 22 providers"/>
</dbReference>
<dbReference type="Ensembl" id="ENST00000262227.7">
    <molecule id="Q9P2N2-2"/>
    <property type="protein sequence ID" value="ENSP00000262227.3"/>
    <property type="gene ID" value="ENSG00000088756.13"/>
</dbReference>
<dbReference type="Ensembl" id="ENST00000314319.7">
    <molecule id="Q9P2N2-5"/>
    <property type="protein sequence ID" value="ENSP00000313506.3"/>
    <property type="gene ID" value="ENSG00000088756.13"/>
</dbReference>
<dbReference type="Ensembl" id="ENST00000383472.9">
    <molecule id="Q9P2N2-1"/>
    <property type="protein sequence ID" value="ENSP00000372964.4"/>
    <property type="gene ID" value="ENSG00000088756.13"/>
</dbReference>
<dbReference type="Ensembl" id="ENST00000419673.6">
    <molecule id="Q9P2N2-5"/>
    <property type="protein sequence ID" value="ENSP00000392660.2"/>
    <property type="gene ID" value="ENSG00000088756.13"/>
</dbReference>
<dbReference type="Ensembl" id="ENST00000532996.5">
    <molecule id="Q9P2N2-3"/>
    <property type="protein sequence ID" value="ENSP00000435990.1"/>
    <property type="gene ID" value="ENSG00000088756.13"/>
</dbReference>
<dbReference type="GeneID" id="79822"/>
<dbReference type="MANE-Select" id="ENST00000383472.9">
    <property type="protein sequence ID" value="ENSP00000372964.4"/>
    <property type="RefSeq nucleotide sequence ID" value="NM_001366230.1"/>
    <property type="RefSeq protein sequence ID" value="NP_001353159.1"/>
</dbReference>
<dbReference type="UCSC" id="uc002knc.5">
    <molecule id="Q9P2N2-1"/>
    <property type="organism name" value="human"/>
</dbReference>
<dbReference type="AGR" id="HGNC:25509"/>
<dbReference type="GeneCards" id="ARHGAP28"/>
<dbReference type="HGNC" id="HGNC:25509">
    <property type="gene designation" value="ARHGAP28"/>
</dbReference>
<dbReference type="HPA" id="ENSG00000088756">
    <property type="expression patterns" value="Group enriched (placenta, testis)"/>
</dbReference>
<dbReference type="MIM" id="610592">
    <property type="type" value="gene"/>
</dbReference>
<dbReference type="neXtProt" id="NX_Q9P2N2"/>
<dbReference type="OpenTargets" id="ENSG00000088756"/>
<dbReference type="PharmGKB" id="PA134915320"/>
<dbReference type="VEuPathDB" id="HostDB:ENSG00000088756"/>
<dbReference type="eggNOG" id="KOG2200">
    <property type="taxonomic scope" value="Eukaryota"/>
</dbReference>
<dbReference type="GeneTree" id="ENSGT00940000158929"/>
<dbReference type="HOGENOM" id="CLU_023268_2_0_1"/>
<dbReference type="InParanoid" id="Q9P2N2"/>
<dbReference type="OMA" id="WVIKPQA"/>
<dbReference type="OrthoDB" id="27680at2759"/>
<dbReference type="PAN-GO" id="Q9P2N2">
    <property type="GO annotations" value="6 GO annotations based on evolutionary models"/>
</dbReference>
<dbReference type="PhylomeDB" id="Q9P2N2"/>
<dbReference type="TreeFam" id="TF314044"/>
<dbReference type="PathwayCommons" id="Q9P2N2"/>
<dbReference type="Reactome" id="R-HSA-8980692">
    <property type="pathway name" value="RHOA GTPase cycle"/>
</dbReference>
<dbReference type="SignaLink" id="Q9P2N2"/>
<dbReference type="SIGNOR" id="Q9P2N2"/>
<dbReference type="ChiTaRS" id="ARHGAP28">
    <property type="organism name" value="human"/>
</dbReference>
<dbReference type="Pharos" id="Q9P2N2">
    <property type="development level" value="Tdark"/>
</dbReference>
<dbReference type="PRO" id="PR:Q9P2N2"/>
<dbReference type="Proteomes" id="UP000005640">
    <property type="component" value="Chromosome 18"/>
</dbReference>
<dbReference type="RNAct" id="Q9P2N2">
    <property type="molecule type" value="protein"/>
</dbReference>
<dbReference type="Bgee" id="ENSG00000088756">
    <property type="expression patterns" value="Expressed in sperm and 134 other cell types or tissues"/>
</dbReference>
<dbReference type="ExpressionAtlas" id="Q9P2N2">
    <property type="expression patterns" value="baseline and differential"/>
</dbReference>
<dbReference type="GO" id="GO:0030054">
    <property type="term" value="C:cell junction"/>
    <property type="evidence" value="ECO:0000314"/>
    <property type="project" value="HPA"/>
</dbReference>
<dbReference type="GO" id="GO:0005737">
    <property type="term" value="C:cytoplasm"/>
    <property type="evidence" value="ECO:0000318"/>
    <property type="project" value="GO_Central"/>
</dbReference>
<dbReference type="GO" id="GO:0005829">
    <property type="term" value="C:cytosol"/>
    <property type="evidence" value="ECO:0000304"/>
    <property type="project" value="Reactome"/>
</dbReference>
<dbReference type="GO" id="GO:0005654">
    <property type="term" value="C:nucleoplasm"/>
    <property type="evidence" value="ECO:0000314"/>
    <property type="project" value="HPA"/>
</dbReference>
<dbReference type="GO" id="GO:0005096">
    <property type="term" value="F:GTPase activator activity"/>
    <property type="evidence" value="ECO:0000318"/>
    <property type="project" value="GO_Central"/>
</dbReference>
<dbReference type="GO" id="GO:0051497">
    <property type="term" value="P:negative regulation of stress fiber assembly"/>
    <property type="evidence" value="ECO:0000318"/>
    <property type="project" value="GO_Central"/>
</dbReference>
<dbReference type="GO" id="GO:0030833">
    <property type="term" value="P:regulation of actin filament polymerization"/>
    <property type="evidence" value="ECO:0000318"/>
    <property type="project" value="GO_Central"/>
</dbReference>
<dbReference type="GO" id="GO:0051056">
    <property type="term" value="P:regulation of small GTPase mediated signal transduction"/>
    <property type="evidence" value="ECO:0000318"/>
    <property type="project" value="GO_Central"/>
</dbReference>
<dbReference type="GO" id="GO:0007165">
    <property type="term" value="P:signal transduction"/>
    <property type="evidence" value="ECO:0007669"/>
    <property type="project" value="InterPro"/>
</dbReference>
<dbReference type="CDD" id="cd04391">
    <property type="entry name" value="RhoGAP_ARHGAP18"/>
    <property type="match status" value="1"/>
</dbReference>
<dbReference type="FunFam" id="1.10.555.10:FF:000018">
    <property type="entry name" value="Rho GTPase activating protein 28"/>
    <property type="match status" value="1"/>
</dbReference>
<dbReference type="Gene3D" id="1.10.555.10">
    <property type="entry name" value="Rho GTPase activation protein"/>
    <property type="match status" value="1"/>
</dbReference>
<dbReference type="InterPro" id="IPR008936">
    <property type="entry name" value="Rho_GTPase_activation_prot"/>
</dbReference>
<dbReference type="InterPro" id="IPR000198">
    <property type="entry name" value="RhoGAP_dom"/>
</dbReference>
<dbReference type="PANTHER" id="PTHR14963">
    <property type="entry name" value="RHO GTPASE ACTIVATING PROTEIN 18,19-RELATED"/>
    <property type="match status" value="1"/>
</dbReference>
<dbReference type="PANTHER" id="PTHR14963:SF5">
    <property type="entry name" value="RHO GTPASE-ACTIVATING PROTEIN 28"/>
    <property type="match status" value="1"/>
</dbReference>
<dbReference type="Pfam" id="PF00620">
    <property type="entry name" value="RhoGAP"/>
    <property type="match status" value="1"/>
</dbReference>
<dbReference type="Pfam" id="PF25442">
    <property type="entry name" value="Ubiquitin_RHG40_C"/>
    <property type="match status" value="1"/>
</dbReference>
<dbReference type="SMART" id="SM00324">
    <property type="entry name" value="RhoGAP"/>
    <property type="match status" value="1"/>
</dbReference>
<dbReference type="SUPFAM" id="SSF48350">
    <property type="entry name" value="GTPase activation domain, GAP"/>
    <property type="match status" value="1"/>
</dbReference>
<dbReference type="PROSITE" id="PS50238">
    <property type="entry name" value="RHOGAP"/>
    <property type="match status" value="1"/>
</dbReference>
<reference key="1">
    <citation type="journal article" date="2000" name="DNA Res.">
        <title>Prediction of the coding sequences of unidentified human genes. XVI. The complete sequences of 150 new cDNA clones from brain which code for large proteins in vitro.</title>
        <authorList>
            <person name="Nagase T."/>
            <person name="Kikuno R."/>
            <person name="Ishikawa K."/>
            <person name="Hirosawa M."/>
            <person name="Ohara O."/>
        </authorList>
    </citation>
    <scope>NUCLEOTIDE SEQUENCE [LARGE SCALE MRNA] (ISOFORM 2)</scope>
    <scope>TISSUE SPECIFICITY</scope>
    <scope>VARIANT PRO-727</scope>
    <source>
        <tissue>Brain</tissue>
    </source>
</reference>
<reference key="2">
    <citation type="journal article" date="2007" name="BMC Genomics">
        <title>The full-ORF clone resource of the German cDNA consortium.</title>
        <authorList>
            <person name="Bechtel S."/>
            <person name="Rosenfelder H."/>
            <person name="Duda A."/>
            <person name="Schmidt C.P."/>
            <person name="Ernst U."/>
            <person name="Wellenreuther R."/>
            <person name="Mehrle A."/>
            <person name="Schuster C."/>
            <person name="Bahr A."/>
            <person name="Bloecker H."/>
            <person name="Heubner D."/>
            <person name="Hoerlein A."/>
            <person name="Michel G."/>
            <person name="Wedler H."/>
            <person name="Koehrer K."/>
            <person name="Ottenwaelder B."/>
            <person name="Poustka A."/>
            <person name="Wiemann S."/>
            <person name="Schupp I."/>
        </authorList>
    </citation>
    <scope>NUCLEOTIDE SEQUENCE [LARGE SCALE MRNA] (ISOFORM 5)</scope>
</reference>
<reference key="3">
    <citation type="journal article" date="2005" name="Nature">
        <title>DNA sequence and analysis of human chromosome 18.</title>
        <authorList>
            <person name="Nusbaum C."/>
            <person name="Zody M.C."/>
            <person name="Borowsky M.L."/>
            <person name="Kamal M."/>
            <person name="Kodira C.D."/>
            <person name="Taylor T.D."/>
            <person name="Whittaker C.A."/>
            <person name="Chang J.L."/>
            <person name="Cuomo C.A."/>
            <person name="Dewar K."/>
            <person name="FitzGerald M.G."/>
            <person name="Yang X."/>
            <person name="Abouelleil A."/>
            <person name="Allen N.R."/>
            <person name="Anderson S."/>
            <person name="Bloom T."/>
            <person name="Bugalter B."/>
            <person name="Butler J."/>
            <person name="Cook A."/>
            <person name="DeCaprio D."/>
            <person name="Engels R."/>
            <person name="Garber M."/>
            <person name="Gnirke A."/>
            <person name="Hafez N."/>
            <person name="Hall J.L."/>
            <person name="Norman C.H."/>
            <person name="Itoh T."/>
            <person name="Jaffe D.B."/>
            <person name="Kuroki Y."/>
            <person name="Lehoczky J."/>
            <person name="Lui A."/>
            <person name="Macdonald P."/>
            <person name="Mauceli E."/>
            <person name="Mikkelsen T.S."/>
            <person name="Naylor J.W."/>
            <person name="Nicol R."/>
            <person name="Nguyen C."/>
            <person name="Noguchi H."/>
            <person name="O'Leary S.B."/>
            <person name="Piqani B."/>
            <person name="Smith C.L."/>
            <person name="Talamas J.A."/>
            <person name="Topham K."/>
            <person name="Totoki Y."/>
            <person name="Toyoda A."/>
            <person name="Wain H.M."/>
            <person name="Young S.K."/>
            <person name="Zeng Q."/>
            <person name="Zimmer A.R."/>
            <person name="Fujiyama A."/>
            <person name="Hattori M."/>
            <person name="Birren B.W."/>
            <person name="Sakaki Y."/>
            <person name="Lander E.S."/>
        </authorList>
    </citation>
    <scope>NUCLEOTIDE SEQUENCE [LARGE SCALE GENOMIC DNA]</scope>
</reference>
<reference key="4">
    <citation type="journal article" date="2004" name="Genome Res.">
        <title>The status, quality, and expansion of the NIH full-length cDNA project: the Mammalian Gene Collection (MGC).</title>
        <authorList>
            <consortium name="The MGC Project Team"/>
        </authorList>
    </citation>
    <scope>NUCLEOTIDE SEQUENCE [LARGE SCALE MRNA] (ISOFORM 3)</scope>
    <scope>NUCLEOTIDE SEQUENCE [LARGE SCALE MRNA] OF 334-729 (ISOFORM 1)</scope>
    <scope>VARIANT PRO-727</scope>
    <source>
        <tissue>Brain</tissue>
        <tissue>Skin</tissue>
    </source>
</reference>
<reference key="5">
    <citation type="journal article" date="2004" name="Nat. Genet.">
        <title>Complete sequencing and characterization of 21,243 full-length human cDNAs.</title>
        <authorList>
            <person name="Ota T."/>
            <person name="Suzuki Y."/>
            <person name="Nishikawa T."/>
            <person name="Otsuki T."/>
            <person name="Sugiyama T."/>
            <person name="Irie R."/>
            <person name="Wakamatsu A."/>
            <person name="Hayashi K."/>
            <person name="Sato H."/>
            <person name="Nagai K."/>
            <person name="Kimura K."/>
            <person name="Makita H."/>
            <person name="Sekine M."/>
            <person name="Obayashi M."/>
            <person name="Nishi T."/>
            <person name="Shibahara T."/>
            <person name="Tanaka T."/>
            <person name="Ishii S."/>
            <person name="Yamamoto J."/>
            <person name="Saito K."/>
            <person name="Kawai Y."/>
            <person name="Isono Y."/>
            <person name="Nakamura Y."/>
            <person name="Nagahari K."/>
            <person name="Murakami K."/>
            <person name="Yasuda T."/>
            <person name="Iwayanagi T."/>
            <person name="Wagatsuma M."/>
            <person name="Shiratori A."/>
            <person name="Sudo H."/>
            <person name="Hosoiri T."/>
            <person name="Kaku Y."/>
            <person name="Kodaira H."/>
            <person name="Kondo H."/>
            <person name="Sugawara M."/>
            <person name="Takahashi M."/>
            <person name="Kanda K."/>
            <person name="Yokoi T."/>
            <person name="Furuya T."/>
            <person name="Kikkawa E."/>
            <person name="Omura Y."/>
            <person name="Abe K."/>
            <person name="Kamihara K."/>
            <person name="Katsuta N."/>
            <person name="Sato K."/>
            <person name="Tanikawa M."/>
            <person name="Yamazaki M."/>
            <person name="Ninomiya K."/>
            <person name="Ishibashi T."/>
            <person name="Yamashita H."/>
            <person name="Murakawa K."/>
            <person name="Fujimori K."/>
            <person name="Tanai H."/>
            <person name="Kimata M."/>
            <person name="Watanabe M."/>
            <person name="Hiraoka S."/>
            <person name="Chiba Y."/>
            <person name="Ishida S."/>
            <person name="Ono Y."/>
            <person name="Takiguchi S."/>
            <person name="Watanabe S."/>
            <person name="Yosida M."/>
            <person name="Hotuta T."/>
            <person name="Kusano J."/>
            <person name="Kanehori K."/>
            <person name="Takahashi-Fujii A."/>
            <person name="Hara H."/>
            <person name="Tanase T.-O."/>
            <person name="Nomura Y."/>
            <person name="Togiya S."/>
            <person name="Komai F."/>
            <person name="Hara R."/>
            <person name="Takeuchi K."/>
            <person name="Arita M."/>
            <person name="Imose N."/>
            <person name="Musashino K."/>
            <person name="Yuuki H."/>
            <person name="Oshima A."/>
            <person name="Sasaki N."/>
            <person name="Aotsuka S."/>
            <person name="Yoshikawa Y."/>
            <person name="Matsunawa H."/>
            <person name="Ichihara T."/>
            <person name="Shiohata N."/>
            <person name="Sano S."/>
            <person name="Moriya S."/>
            <person name="Momiyama H."/>
            <person name="Satoh N."/>
            <person name="Takami S."/>
            <person name="Terashima Y."/>
            <person name="Suzuki O."/>
            <person name="Nakagawa S."/>
            <person name="Senoh A."/>
            <person name="Mizoguchi H."/>
            <person name="Goto Y."/>
            <person name="Shimizu F."/>
            <person name="Wakebe H."/>
            <person name="Hishigaki H."/>
            <person name="Watanabe T."/>
            <person name="Sugiyama A."/>
            <person name="Takemoto M."/>
            <person name="Kawakami B."/>
            <person name="Yamazaki M."/>
            <person name="Watanabe K."/>
            <person name="Kumagai A."/>
            <person name="Itakura S."/>
            <person name="Fukuzumi Y."/>
            <person name="Fujimori Y."/>
            <person name="Komiyama M."/>
            <person name="Tashiro H."/>
            <person name="Tanigami A."/>
            <person name="Fujiwara T."/>
            <person name="Ono T."/>
            <person name="Yamada K."/>
            <person name="Fujii Y."/>
            <person name="Ozaki K."/>
            <person name="Hirao M."/>
            <person name="Ohmori Y."/>
            <person name="Kawabata A."/>
            <person name="Hikiji T."/>
            <person name="Kobatake N."/>
            <person name="Inagaki H."/>
            <person name="Ikema Y."/>
            <person name="Okamoto S."/>
            <person name="Okitani R."/>
            <person name="Kawakami T."/>
            <person name="Noguchi S."/>
            <person name="Itoh T."/>
            <person name="Shigeta K."/>
            <person name="Senba T."/>
            <person name="Matsumura K."/>
            <person name="Nakajima Y."/>
            <person name="Mizuno T."/>
            <person name="Morinaga M."/>
            <person name="Sasaki M."/>
            <person name="Togashi T."/>
            <person name="Oyama M."/>
            <person name="Hata H."/>
            <person name="Watanabe M."/>
            <person name="Komatsu T."/>
            <person name="Mizushima-Sugano J."/>
            <person name="Satoh T."/>
            <person name="Shirai Y."/>
            <person name="Takahashi Y."/>
            <person name="Nakagawa K."/>
            <person name="Okumura K."/>
            <person name="Nagase T."/>
            <person name="Nomura N."/>
            <person name="Kikuchi H."/>
            <person name="Masuho Y."/>
            <person name="Yamashita R."/>
            <person name="Nakai K."/>
            <person name="Yada T."/>
            <person name="Nakamura Y."/>
            <person name="Ohara O."/>
            <person name="Isogai T."/>
            <person name="Sugano S."/>
        </authorList>
    </citation>
    <scope>NUCLEOTIDE SEQUENCE [LARGE SCALE MRNA] OF 298-729 (ISOFORM 3)</scope>
    <scope>VARIANT PRO-727</scope>
</reference>
<reference key="6">
    <citation type="journal article" date="2011" name="Sci. Signal.">
        <title>System-wide temporal characterization of the proteome and phosphoproteome of human embryonic stem cell differentiation.</title>
        <authorList>
            <person name="Rigbolt K.T."/>
            <person name="Prokhorova T.A."/>
            <person name="Akimov V."/>
            <person name="Henningsen J."/>
            <person name="Johansen P.T."/>
            <person name="Kratchmarova I."/>
            <person name="Kassem M."/>
            <person name="Mann M."/>
            <person name="Olsen J.V."/>
            <person name="Blagoev B."/>
        </authorList>
    </citation>
    <scope>IDENTIFICATION BY MASS SPECTROMETRY [LARGE SCALE ANALYSIS]</scope>
</reference>